<keyword id="KW-0489">Methyltransferase</keyword>
<keyword id="KW-1185">Reference proteome</keyword>
<keyword id="KW-0949">S-adenosyl-L-methionine</keyword>
<keyword id="KW-0808">Transferase</keyword>
<keyword id="KW-0819">tRNA processing</keyword>
<reference key="1">
    <citation type="journal article" date="2011" name="Stand. Genomic Sci.">
        <title>Complete genome sequence of Rhodospirillum rubrum type strain (S1).</title>
        <authorList>
            <person name="Munk A.C."/>
            <person name="Copeland A."/>
            <person name="Lucas S."/>
            <person name="Lapidus A."/>
            <person name="Del Rio T.G."/>
            <person name="Barry K."/>
            <person name="Detter J.C."/>
            <person name="Hammon N."/>
            <person name="Israni S."/>
            <person name="Pitluck S."/>
            <person name="Brettin T."/>
            <person name="Bruce D."/>
            <person name="Han C."/>
            <person name="Tapia R."/>
            <person name="Gilna P."/>
            <person name="Schmutz J."/>
            <person name="Larimer F."/>
            <person name="Land M."/>
            <person name="Kyrpides N.C."/>
            <person name="Mavromatis K."/>
            <person name="Richardson P."/>
            <person name="Rohde M."/>
            <person name="Goeker M."/>
            <person name="Klenk H.P."/>
            <person name="Zhang Y."/>
            <person name="Roberts G.P."/>
            <person name="Reslewic S."/>
            <person name="Schwartz D.C."/>
        </authorList>
    </citation>
    <scope>NUCLEOTIDE SEQUENCE [LARGE SCALE GENOMIC DNA]</scope>
    <source>
        <strain>ATCC 11170 / ATH 1.1.1 / DSM 467 / LMG 4362 / NCIMB 8255 / S1</strain>
    </source>
</reference>
<protein>
    <recommendedName>
        <fullName evidence="2">tRNA (guanine-N(7)-)-methyltransferase</fullName>
        <ecNumber evidence="2">2.1.1.33</ecNumber>
    </recommendedName>
    <alternativeName>
        <fullName evidence="2">tRNA (guanine(46)-N(7))-methyltransferase</fullName>
    </alternativeName>
    <alternativeName>
        <fullName evidence="2">tRNA(m7G46)-methyltransferase</fullName>
    </alternativeName>
</protein>
<dbReference type="EC" id="2.1.1.33" evidence="2"/>
<dbReference type="EMBL" id="CP000230">
    <property type="protein sequence ID" value="ABC24571.1"/>
    <property type="molecule type" value="Genomic_DNA"/>
</dbReference>
<dbReference type="RefSeq" id="WP_011391524.1">
    <property type="nucleotide sequence ID" value="NC_007643.1"/>
</dbReference>
<dbReference type="RefSeq" id="YP_428858.1">
    <property type="nucleotide sequence ID" value="NC_007643.1"/>
</dbReference>
<dbReference type="SMR" id="Q2RMS4"/>
<dbReference type="STRING" id="269796.Rru_A3777"/>
<dbReference type="EnsemblBacteria" id="ABC24571">
    <property type="protein sequence ID" value="ABC24571"/>
    <property type="gene ID" value="Rru_A3777"/>
</dbReference>
<dbReference type="KEGG" id="rru:Rru_A3777"/>
<dbReference type="PATRIC" id="fig|269796.9.peg.3899"/>
<dbReference type="eggNOG" id="COG0220">
    <property type="taxonomic scope" value="Bacteria"/>
</dbReference>
<dbReference type="HOGENOM" id="CLU_050910_0_3_5"/>
<dbReference type="PhylomeDB" id="Q2RMS4"/>
<dbReference type="UniPathway" id="UPA00989"/>
<dbReference type="Proteomes" id="UP000001929">
    <property type="component" value="Chromosome"/>
</dbReference>
<dbReference type="GO" id="GO:0043527">
    <property type="term" value="C:tRNA methyltransferase complex"/>
    <property type="evidence" value="ECO:0007669"/>
    <property type="project" value="TreeGrafter"/>
</dbReference>
<dbReference type="GO" id="GO:0008176">
    <property type="term" value="F:tRNA (guanine(46)-N7)-methyltransferase activity"/>
    <property type="evidence" value="ECO:0007669"/>
    <property type="project" value="UniProtKB-UniRule"/>
</dbReference>
<dbReference type="Gene3D" id="3.40.50.150">
    <property type="entry name" value="Vaccinia Virus protein VP39"/>
    <property type="match status" value="1"/>
</dbReference>
<dbReference type="HAMAP" id="MF_01057">
    <property type="entry name" value="tRNA_methyltr_TrmB"/>
    <property type="match status" value="1"/>
</dbReference>
<dbReference type="InterPro" id="IPR029063">
    <property type="entry name" value="SAM-dependent_MTases_sf"/>
</dbReference>
<dbReference type="InterPro" id="IPR003358">
    <property type="entry name" value="tRNA_(Gua-N-7)_MeTrfase_Trmb"/>
</dbReference>
<dbReference type="InterPro" id="IPR055361">
    <property type="entry name" value="tRNA_methyltr_TrmB_bact"/>
</dbReference>
<dbReference type="NCBIfam" id="TIGR00091">
    <property type="entry name" value="tRNA (guanosine(46)-N7)-methyltransferase TrmB"/>
    <property type="match status" value="1"/>
</dbReference>
<dbReference type="PANTHER" id="PTHR23417">
    <property type="entry name" value="3-DEOXY-D-MANNO-OCTULOSONIC-ACID TRANSFERASE/TRNA GUANINE-N 7 - -METHYLTRANSFERASE"/>
    <property type="match status" value="1"/>
</dbReference>
<dbReference type="PANTHER" id="PTHR23417:SF14">
    <property type="entry name" value="PENTACOTRIPEPTIDE-REPEAT REGION OF PRORP DOMAIN-CONTAINING PROTEIN"/>
    <property type="match status" value="1"/>
</dbReference>
<dbReference type="Pfam" id="PF02390">
    <property type="entry name" value="Methyltransf_4"/>
    <property type="match status" value="1"/>
</dbReference>
<dbReference type="SUPFAM" id="SSF53335">
    <property type="entry name" value="S-adenosyl-L-methionine-dependent methyltransferases"/>
    <property type="match status" value="1"/>
</dbReference>
<dbReference type="PROSITE" id="PS51625">
    <property type="entry name" value="SAM_MT_TRMB"/>
    <property type="match status" value="1"/>
</dbReference>
<name>TRMB_RHORT</name>
<evidence type="ECO:0000250" key="1"/>
<evidence type="ECO:0000255" key="2">
    <source>
        <dbReference type="HAMAP-Rule" id="MF_01057"/>
    </source>
</evidence>
<comment type="function">
    <text evidence="2">Catalyzes the formation of N(7)-methylguanine at position 46 (m7G46) in tRNA.</text>
</comment>
<comment type="catalytic activity">
    <reaction evidence="2">
        <text>guanosine(46) in tRNA + S-adenosyl-L-methionine = N(7)-methylguanosine(46) in tRNA + S-adenosyl-L-homocysteine</text>
        <dbReference type="Rhea" id="RHEA:42708"/>
        <dbReference type="Rhea" id="RHEA-COMP:10188"/>
        <dbReference type="Rhea" id="RHEA-COMP:10189"/>
        <dbReference type="ChEBI" id="CHEBI:57856"/>
        <dbReference type="ChEBI" id="CHEBI:59789"/>
        <dbReference type="ChEBI" id="CHEBI:74269"/>
        <dbReference type="ChEBI" id="CHEBI:74480"/>
        <dbReference type="EC" id="2.1.1.33"/>
    </reaction>
</comment>
<comment type="pathway">
    <text evidence="2">tRNA modification; N(7)-methylguanine-tRNA biosynthesis.</text>
</comment>
<comment type="similarity">
    <text evidence="2">Belongs to the class I-like SAM-binding methyltransferase superfamily. TrmB family.</text>
</comment>
<feature type="chain" id="PRO_0000229192" description="tRNA (guanine-N(7)-)-methyltransferase">
    <location>
        <begin position="1"/>
        <end position="255"/>
    </location>
</feature>
<feature type="active site" evidence="1">
    <location>
        <position position="138"/>
    </location>
</feature>
<feature type="binding site" evidence="2">
    <location>
        <position position="64"/>
    </location>
    <ligand>
        <name>S-adenosyl-L-methionine</name>
        <dbReference type="ChEBI" id="CHEBI:59789"/>
    </ligand>
</feature>
<feature type="binding site" evidence="2">
    <location>
        <position position="89"/>
    </location>
    <ligand>
        <name>S-adenosyl-L-methionine</name>
        <dbReference type="ChEBI" id="CHEBI:59789"/>
    </ligand>
</feature>
<feature type="binding site" evidence="2">
    <location>
        <position position="116"/>
    </location>
    <ligand>
        <name>S-adenosyl-L-methionine</name>
        <dbReference type="ChEBI" id="CHEBI:59789"/>
    </ligand>
</feature>
<feature type="binding site" evidence="2">
    <location>
        <position position="138"/>
    </location>
    <ligand>
        <name>S-adenosyl-L-methionine</name>
        <dbReference type="ChEBI" id="CHEBI:59789"/>
    </ligand>
</feature>
<feature type="binding site" evidence="2">
    <location>
        <position position="142"/>
    </location>
    <ligand>
        <name>substrate</name>
    </ligand>
</feature>
<feature type="binding site" evidence="2">
    <location>
        <position position="174"/>
    </location>
    <ligand>
        <name>substrate</name>
    </ligand>
</feature>
<feature type="binding site" evidence="2">
    <location>
        <begin position="212"/>
        <end position="215"/>
    </location>
    <ligand>
        <name>substrate</name>
    </ligand>
</feature>
<proteinExistence type="inferred from homology"/>
<accession>Q2RMS4</accession>
<organism>
    <name type="scientific">Rhodospirillum rubrum (strain ATCC 11170 / ATH 1.1.1 / DSM 467 / LMG 4362 / NCIMB 8255 / S1)</name>
    <dbReference type="NCBI Taxonomy" id="269796"/>
    <lineage>
        <taxon>Bacteria</taxon>
        <taxon>Pseudomonadati</taxon>
        <taxon>Pseudomonadota</taxon>
        <taxon>Alphaproteobacteria</taxon>
        <taxon>Rhodospirillales</taxon>
        <taxon>Rhodospirillaceae</taxon>
        <taxon>Rhodospirillum</taxon>
    </lineage>
</organism>
<sequence>MPEKPTEDARFYGRRKGKPLRATRQRLLDTMLPALTLPLAGLGEGERLDPRGLFPRPVDQLWLEIGFGGGEHLVAQAAAHPEVGLIGSEVFAYGVGKALSQIDETGVDNIRLWPEDVRQVLPALPDGCLQRLFVLFPDPWPKRRHARRRMIQPARLDDFARLLADGGELRVASDDMGYVRWTLMHVTAHPAFRWTAQGPTDWRERPADWVETRYEAKALQAGRKPAYLIFRRRPRAADPGTLAEAPAGEGADNNP</sequence>
<gene>
    <name evidence="2" type="primary">trmB</name>
    <name type="ordered locus">Rru_A3777</name>
</gene>